<feature type="chain" id="PRO_0000198795" description="cGMP-dependent 3',5'-cyclic phosphodiesterase">
    <location>
        <begin position="1"/>
        <end position="921"/>
    </location>
</feature>
<feature type="domain" description="GAF 1" evidence="5">
    <location>
        <begin position="220"/>
        <end position="357"/>
    </location>
</feature>
<feature type="domain" description="GAF 2" evidence="5">
    <location>
        <begin position="389"/>
        <end position="528"/>
    </location>
</feature>
<feature type="domain" description="PDEase" evidence="6">
    <location>
        <begin position="558"/>
        <end position="882"/>
    </location>
</feature>
<feature type="region of interest" description="Disordered" evidence="7">
    <location>
        <begin position="1"/>
        <end position="21"/>
    </location>
</feature>
<feature type="region of interest" description="Disordered" evidence="7">
    <location>
        <begin position="177"/>
        <end position="198"/>
    </location>
</feature>
<feature type="compositionally biased region" description="Polar residues" evidence="7">
    <location>
        <begin position="177"/>
        <end position="188"/>
    </location>
</feature>
<feature type="active site" description="Proton donor" evidence="2">
    <location>
        <position position="636"/>
    </location>
</feature>
<feature type="binding site" evidence="4">
    <location>
        <position position="411"/>
    </location>
    <ligand>
        <name>3',5'-cyclic GMP</name>
        <dbReference type="ChEBI" id="CHEBI:57746"/>
        <note>allosteric activator</note>
    </ligand>
</feature>
<feature type="binding site" evidence="4">
    <location>
        <position position="426"/>
    </location>
    <ligand>
        <name>3',5'-cyclic GMP</name>
        <dbReference type="ChEBI" id="CHEBI:57746"/>
        <note>allosteric activator</note>
    </ligand>
</feature>
<feature type="binding site" evidence="4">
    <location>
        <position position="445"/>
    </location>
    <ligand>
        <name>3',5'-cyclic GMP</name>
        <dbReference type="ChEBI" id="CHEBI:57746"/>
        <note>allosteric activator</note>
    </ligand>
</feature>
<feature type="binding site" evidence="4">
    <location>
        <position position="468"/>
    </location>
    <ligand>
        <name>3',5'-cyclic GMP</name>
        <dbReference type="ChEBI" id="CHEBI:57746"/>
        <note>allosteric activator</note>
    </ligand>
</feature>
<feature type="binding site" evidence="4">
    <location>
        <position position="479"/>
    </location>
    <ligand>
        <name>3',5'-cyclic GMP</name>
        <dbReference type="ChEBI" id="CHEBI:57746"/>
        <note>allosteric activator</note>
    </ligand>
</feature>
<feature type="binding site" evidence="1">
    <location>
        <position position="640"/>
    </location>
    <ligand>
        <name>Zn(2+)</name>
        <dbReference type="ChEBI" id="CHEBI:29105"/>
    </ligand>
</feature>
<feature type="binding site" evidence="1">
    <location>
        <position position="676"/>
    </location>
    <ligand>
        <name>Zn(2+)</name>
        <dbReference type="ChEBI" id="CHEBI:29105"/>
    </ligand>
</feature>
<feature type="binding site" evidence="1">
    <location>
        <position position="677"/>
    </location>
    <ligand>
        <name>Mg(2+)</name>
        <dbReference type="ChEBI" id="CHEBI:18420"/>
    </ligand>
</feature>
<feature type="binding site" evidence="1">
    <location>
        <position position="677"/>
    </location>
    <ligand>
        <name>Zn(2+)</name>
        <dbReference type="ChEBI" id="CHEBI:29105"/>
    </ligand>
</feature>
<feature type="binding site" evidence="1">
    <location>
        <position position="788"/>
    </location>
    <ligand>
        <name>Zn(2+)</name>
        <dbReference type="ChEBI" id="CHEBI:29105"/>
    </ligand>
</feature>
<feature type="modified residue" description="N-acetylmethionine" evidence="9">
    <location>
        <position position="1"/>
    </location>
</feature>
<feature type="splice variant" id="VSP_004555" description="In isoform PDE2A3." evidence="12">
    <original>MRRQPAASRDLFAQEPVPPGSGDGA</original>
    <variation>MGQACGHSILCRSQQYPAARPAEPRGQQVFLKPDEPPPPPQPCADS</variation>
    <location>
        <begin position="1"/>
        <end position="25"/>
    </location>
</feature>
<feature type="sequence conflict" description="In Ref. 2; AAA87353." evidence="13" ref="2">
    <original>N</original>
    <variation>D</variation>
    <location>
        <position position="204"/>
    </location>
</feature>
<feature type="sequence conflict" description="In Ref. 4; AA sequence." evidence="13" ref="4">
    <original>P</original>
    <variation>L</variation>
    <location>
        <position position="633"/>
    </location>
</feature>
<gene>
    <name evidence="1" type="primary">PDE2A</name>
</gene>
<protein>
    <recommendedName>
        <fullName evidence="14">cGMP-dependent 3',5'-cyclic phosphodiesterase</fullName>
        <ecNumber evidence="8">3.1.4.17</ecNumber>
    </recommendedName>
    <alternativeName>
        <fullName evidence="11">Cyclic GMP-stimulated phosphodiesterase</fullName>
        <shortName evidence="11">CGS-PDE</shortName>
        <shortName evidence="11">cGSPDE</shortName>
    </alternativeName>
</protein>
<proteinExistence type="evidence at protein level"/>
<sequence length="921" mass="103228">MRRQPAASRDLFAQEPVPPGSGDGALQDALLSLGSVIDVAGLQQAVKEALSAVLPKVETVYTYLLDGESRLVCEEPPHELPQEGKVREAVISRKRLGCNGLGPSDLPGKPLARLVAPLAPDTQVLVIPLVDKEAGAVAAVILVHCGQLSDNEEWSLQAVEKHTLVALKRVQALQQRESSVAPEATQNPPEEAAGDQKGGVAYTNQDRKILQLCGELYDLDASSLQLKVLQYLQQETQASRCCLLLVSEDNLQLSCKVIGDKVLEEEISFPLTTGRLGQVVEDKKSIQLKDLTSEDMQQLQSMLGCEVQAMLCVPVISRATDQVVALACAFNKLGGDLFTDQDEHVIQHCFHYTSTVLTSTLAFQKEQKLKCECQALLQVAKNLFTHLDDVSVLLQEIITEARNLSNAEICSVFLLDQNELVAKVFDGGVVEDESYEIRIPADQGIAGHVATTGQILNIPDAYAHPLFYRGVDDSTGFRTRNILCFPIKNENQEVIGVAELVNKINGPWFSKFDEDLATAFSIYCGISIAHSLLYKKVNEAQYRSHLANEMMMYHMKVSDDEYTKLLHDGIQPVAAIDSNFASFTYTPRSLPEDDTSMAILSMLQDMNFINNYKIDCPTLARFCLMVKKGYRDPPYHNWMHAFSVSHFCYLLYKNLELTNYLEDMEIFALFISCMCHDLDHRGTNNSFQVASKSVLAALYSSEGSVMERHHFAQAIAILNTHGCNIFDHFSRKDYQRMLDLMRDIILATDLAHHLRIFKDLQKMAEVGYDRTNKQHHSLLLCLLMTSCDLSDQTKGWKTTRKIAELIYKEFFSQGDLEKAMGNRPMEMMDREKAYIPELQISFMEHIAMPIYKLLQDLFPKAAELYERVASNREHWTKVSHKFTIRGLPSNNSLDFLDEEYEVPDLDGARAPINGCCSLDAE</sequence>
<comment type="function">
    <text evidence="1 8 10">cGMP-activated cyclic nucleotide phosphodiesterase with a dual-specificity for the second messengers cAMP and cGMP, which are key regulators of many important physiological processes (PubMed:1654333, PubMed:6276403). Has a higher efficiency with cGMP compared to cAMP (By similarity). Plays a role in cell growth and migration (By similarity).</text>
</comment>
<comment type="function">
    <molecule>Isoform PDE2A2</molecule>
    <text evidence="3">Regulates mitochondrial cAMP levels and respiration. Involved in the regulation of mitochondria morphology/dynamics and apoptotic cell death via local modulation of cAMP/PKA signaling in the mitochondrion, including the monitoring of local cAMP levels at the outer mitochondrial membrane and of PKA-dependent phosphorylation of DNM1L.</text>
</comment>
<comment type="catalytic activity">
    <reaction evidence="8 10">
        <text>a nucleoside 3',5'-cyclic phosphate + H2O = a nucleoside 5'-phosphate + H(+)</text>
        <dbReference type="Rhea" id="RHEA:14653"/>
        <dbReference type="ChEBI" id="CHEBI:15377"/>
        <dbReference type="ChEBI" id="CHEBI:15378"/>
        <dbReference type="ChEBI" id="CHEBI:57867"/>
        <dbReference type="ChEBI" id="CHEBI:58464"/>
        <dbReference type="EC" id="3.1.4.17"/>
    </reaction>
    <physiologicalReaction direction="left-to-right" evidence="14">
        <dbReference type="Rhea" id="RHEA:14654"/>
    </physiologicalReaction>
</comment>
<comment type="catalytic activity">
    <reaction evidence="8 10">
        <text>3',5'-cyclic GMP + H2O = GMP + H(+)</text>
        <dbReference type="Rhea" id="RHEA:16957"/>
        <dbReference type="ChEBI" id="CHEBI:15377"/>
        <dbReference type="ChEBI" id="CHEBI:15378"/>
        <dbReference type="ChEBI" id="CHEBI:57746"/>
        <dbReference type="ChEBI" id="CHEBI:58115"/>
    </reaction>
    <physiologicalReaction direction="left-to-right" evidence="14">
        <dbReference type="Rhea" id="RHEA:16958"/>
    </physiologicalReaction>
</comment>
<comment type="catalytic activity">
    <reaction evidence="8 10">
        <text>3',5'-cyclic AMP + H2O = AMP + H(+)</text>
        <dbReference type="Rhea" id="RHEA:25277"/>
        <dbReference type="ChEBI" id="CHEBI:15377"/>
        <dbReference type="ChEBI" id="CHEBI:15378"/>
        <dbReference type="ChEBI" id="CHEBI:58165"/>
        <dbReference type="ChEBI" id="CHEBI:456215"/>
    </reaction>
    <physiologicalReaction direction="left-to-right" evidence="14">
        <dbReference type="Rhea" id="RHEA:25278"/>
    </physiologicalReaction>
</comment>
<comment type="cofactor">
    <cofactor evidence="8">
        <name>Zn(2+)</name>
        <dbReference type="ChEBI" id="CHEBI:29105"/>
    </cofactor>
    <text evidence="1">Binds 2 divalent metal cations per subunit. Site 1 may preferentially bind zinc ions.</text>
</comment>
<comment type="cofactor">
    <cofactor evidence="1">
        <name>Mg(2+)</name>
        <dbReference type="ChEBI" id="CHEBI:18420"/>
    </cofactor>
    <text evidence="1">Binds 2 divalent metal cations per subunit. Site 2 has a preference for magnesium ions.</text>
</comment>
<comment type="activity regulation">
    <text evidence="8 10">The 3',5'-cyclic-AMP phosphodiesterase activity is stimulated by 3',5'-cyclic GMP.</text>
</comment>
<comment type="subunit">
    <text evidence="1">Homodimer.</text>
</comment>
<comment type="subcellular location">
    <molecule>Isoform PDE2A3</molecule>
    <subcellularLocation>
        <location evidence="3">Cell membrane</location>
        <topology evidence="13">Peripheral membrane protein</topology>
    </subcellularLocation>
</comment>
<comment type="subcellular location">
    <molecule>Isoform PDE2A1</molecule>
    <subcellularLocation>
        <location evidence="3">Cytoplasm</location>
    </subcellularLocation>
</comment>
<comment type="subcellular location">
    <molecule>Isoform PDE2A2</molecule>
    <subcellularLocation>
        <location evidence="3">Mitochondrion</location>
    </subcellularLocation>
    <subcellularLocation>
        <location evidence="3">Mitochondrion inner membrane</location>
    </subcellularLocation>
    <subcellularLocation>
        <location evidence="3">Mitochondrion outer membrane</location>
    </subcellularLocation>
</comment>
<comment type="alternative products">
    <event type="alternative splicing"/>
    <isoform>
        <id>P14099-1</id>
        <name>PDE2A1</name>
        <sequence type="displayed"/>
    </isoform>
    <isoform>
        <id>P14099-3</id>
        <name>PDE2A2</name>
        <sequence type="not described"/>
    </isoform>
    <isoform>
        <id>P14099-2</id>
        <name>PDE2A3</name>
        <sequence type="described" ref="VSP_004555"/>
    </isoform>
    <text>Additional isoforms seem to exist.</text>
</comment>
<comment type="domain">
    <text evidence="4">The GAF 1 domain functions as a dimerization domain.</text>
</comment>
<comment type="domain">
    <text evidence="4">The GAF 2 domains binds cGMP, which acts as an allosteric activator.</text>
</comment>
<comment type="similarity">
    <text evidence="13">Belongs to the cyclic nucleotide phosphodiesterase family. PDE2 subfamily.</text>
</comment>
<keyword id="KW-0002">3D-structure</keyword>
<keyword id="KW-0007">Acetylation</keyword>
<keyword id="KW-0025">Alternative splicing</keyword>
<keyword id="KW-0114">cAMP</keyword>
<keyword id="KW-1003">Cell membrane</keyword>
<keyword id="KW-0140">cGMP</keyword>
<keyword id="KW-0142">cGMP-binding</keyword>
<keyword id="KW-0963">Cytoplasm</keyword>
<keyword id="KW-0903">Direct protein sequencing</keyword>
<keyword id="KW-0378">Hydrolase</keyword>
<keyword id="KW-0460">Magnesium</keyword>
<keyword id="KW-0472">Membrane</keyword>
<keyword id="KW-0479">Metal-binding</keyword>
<keyword id="KW-0496">Mitochondrion</keyword>
<keyword id="KW-0999">Mitochondrion inner membrane</keyword>
<keyword id="KW-1000">Mitochondrion outer membrane</keyword>
<keyword id="KW-0547">Nucleotide-binding</keyword>
<keyword id="KW-1185">Reference proteome</keyword>
<keyword id="KW-0677">Repeat</keyword>
<keyword id="KW-0862">Zinc</keyword>
<evidence type="ECO:0000250" key="1">
    <source>
        <dbReference type="UniProtKB" id="O00408"/>
    </source>
</evidence>
<evidence type="ECO:0000250" key="2">
    <source>
        <dbReference type="UniProtKB" id="O76083"/>
    </source>
</evidence>
<evidence type="ECO:0000250" key="3">
    <source>
        <dbReference type="UniProtKB" id="Q01062"/>
    </source>
</evidence>
<evidence type="ECO:0000250" key="4">
    <source>
        <dbReference type="UniProtKB" id="Q922S4"/>
    </source>
</evidence>
<evidence type="ECO:0000255" key="5"/>
<evidence type="ECO:0000255" key="6">
    <source>
        <dbReference type="PROSITE-ProRule" id="PRU01192"/>
    </source>
</evidence>
<evidence type="ECO:0000256" key="7">
    <source>
        <dbReference type="SAM" id="MobiDB-lite"/>
    </source>
</evidence>
<evidence type="ECO:0000269" key="8">
    <source>
    </source>
</evidence>
<evidence type="ECO:0000269" key="9">
    <source>
    </source>
</evidence>
<evidence type="ECO:0000269" key="10">
    <source>
    </source>
</evidence>
<evidence type="ECO:0000303" key="11">
    <source>
    </source>
</evidence>
<evidence type="ECO:0000303" key="12">
    <source ref="2"/>
</evidence>
<evidence type="ECO:0000305" key="13"/>
<evidence type="ECO:0000305" key="14">
    <source>
    </source>
</evidence>
<reference key="1">
    <citation type="journal article" date="1991" name="J. Biol. Chem.">
        <title>Molecular cloning of a cyclic GMP-stimulated cyclic nucleotide phosphodiesterase cDNA. Identification and distribution of isozyme variants.</title>
        <authorList>
            <person name="Sonnenburg W.K."/>
            <person name="Mullaney P.J."/>
            <person name="Beavo J.A."/>
        </authorList>
    </citation>
    <scope>NUCLEOTIDE SEQUENCE [MRNA] (ISOFORM PDE2A1)</scope>
    <scope>FUNCTION</scope>
    <scope>CATALYTIC ACTIVITY</scope>
    <scope>COFACTOR</scope>
    <scope>ACTIVITY REGULATION</scope>
</reference>
<reference key="2">
    <citation type="submission" date="1996-02" db="EMBL/GenBank/DDBJ databases">
        <authorList>
            <person name="Juilfs D.M."/>
            <person name="Sonnenburg W.K."/>
            <person name="Seraji S."/>
            <person name="Beavo J.A."/>
        </authorList>
    </citation>
    <scope>NUCLEOTIDE SEQUENCE [MRNA] (ISOFORM PDE2A3)</scope>
    <source>
        <tissue>Brain</tissue>
    </source>
</reference>
<reference key="3">
    <citation type="journal article" date="1990" name="Biochemistry">
        <title>Amino acid sequence of the cyclic GMP stimulated cyclic nucleotide phosphodiesterase from bovine heart.</title>
        <authorList>
            <person name="le Trong H."/>
            <person name="Beier N."/>
            <person name="Sonnenburg W.K."/>
            <person name="Stroop S.D."/>
            <person name="Walsh K.A."/>
            <person name="Beavo J.A."/>
            <person name="Charbonneau H."/>
        </authorList>
    </citation>
    <scope>NUCLEOTIDE SEQUENCE [MRNA] OF 592-921</scope>
    <scope>ACETYLATION AT MET-1</scope>
    <source>
        <tissue>Heart</tissue>
    </source>
</reference>
<reference key="4">
    <citation type="journal article" date="1986" name="Proc. Natl. Acad. Sci. U.S.A.">
        <title>Identification of a conserved domain among cyclic nucleotide phosphodiesterases from diverse species.</title>
        <authorList>
            <person name="Charbonneau H."/>
            <person name="Beier N."/>
            <person name="Walsh K.A."/>
            <person name="Beavo J.A."/>
        </authorList>
    </citation>
    <scope>PROTEIN SEQUENCE OF 613-694 AND 808-868</scope>
    <source>
        <tissue>Heart</tissue>
    </source>
</reference>
<reference key="5">
    <citation type="journal article" date="1982" name="J. Biol. Chem.">
        <title>Purification and characterization of a cyclic GMP-stimulated cyclic nucleotide phosphodiesterase from bovine tissues.</title>
        <authorList>
            <person name="Martins T.J."/>
            <person name="Mumby M.C."/>
            <person name="Beavo J.A."/>
        </authorList>
    </citation>
    <scope>FUNCTION</scope>
    <scope>CATALYTIC ACTIVITY</scope>
    <scope>ACTIVITY REGULATION</scope>
</reference>
<organism>
    <name type="scientific">Bos taurus</name>
    <name type="common">Bovine</name>
    <dbReference type="NCBI Taxonomy" id="9913"/>
    <lineage>
        <taxon>Eukaryota</taxon>
        <taxon>Metazoa</taxon>
        <taxon>Chordata</taxon>
        <taxon>Craniata</taxon>
        <taxon>Vertebrata</taxon>
        <taxon>Euteleostomi</taxon>
        <taxon>Mammalia</taxon>
        <taxon>Eutheria</taxon>
        <taxon>Laurasiatheria</taxon>
        <taxon>Artiodactyla</taxon>
        <taxon>Ruminantia</taxon>
        <taxon>Pecora</taxon>
        <taxon>Bovidae</taxon>
        <taxon>Bovinae</taxon>
        <taxon>Bos</taxon>
    </lineage>
</organism>
<name>PDE2A_BOVIN</name>
<accession>P14099</accession>
<accession>Q28064</accession>
<dbReference type="EC" id="3.1.4.17" evidence="8"/>
<dbReference type="EMBL" id="M73512">
    <property type="protein sequence ID" value="AAA74559.1"/>
    <property type="molecule type" value="mRNA"/>
</dbReference>
<dbReference type="EMBL" id="L49503">
    <property type="protein sequence ID" value="AAA87353.1"/>
    <property type="molecule type" value="mRNA"/>
</dbReference>
<dbReference type="PIR" id="A40981">
    <property type="entry name" value="A40981"/>
</dbReference>
<dbReference type="RefSeq" id="NP_001137318.1">
    <property type="nucleotide sequence ID" value="NM_001143846.1"/>
</dbReference>
<dbReference type="RefSeq" id="NP_001243202.1">
    <molecule id="P14099-1"/>
    <property type="nucleotide sequence ID" value="NM_001256273.1"/>
</dbReference>
<dbReference type="PDB" id="3JAB">
    <property type="method" value="EM"/>
    <property type="resolution" value="11.00 A"/>
    <property type="chains" value="B/N=367-551"/>
</dbReference>
<dbReference type="PDB" id="3JBQ">
    <property type="method" value="EM"/>
    <property type="resolution" value="11.00 A"/>
    <property type="chains" value="C/G=367-551"/>
</dbReference>
<dbReference type="PDBsum" id="3JAB"/>
<dbReference type="PDBsum" id="3JBQ"/>
<dbReference type="SMR" id="P14099"/>
<dbReference type="FunCoup" id="P14099">
    <property type="interactions" value="55"/>
</dbReference>
<dbReference type="STRING" id="9913.ENSBTAP00000061440"/>
<dbReference type="BindingDB" id="P14099"/>
<dbReference type="ChEMBL" id="CHEMBL3477"/>
<dbReference type="DrugCentral" id="P14099"/>
<dbReference type="iPTMnet" id="P14099"/>
<dbReference type="PaxDb" id="9913-ENSBTAP00000011077"/>
<dbReference type="GeneID" id="281971"/>
<dbReference type="KEGG" id="bta:281971"/>
<dbReference type="CTD" id="5138"/>
<dbReference type="eggNOG" id="KOG3689">
    <property type="taxonomic scope" value="Eukaryota"/>
</dbReference>
<dbReference type="InParanoid" id="P14099"/>
<dbReference type="OrthoDB" id="295473at2759"/>
<dbReference type="EvolutionaryTrace" id="P14099"/>
<dbReference type="Proteomes" id="UP000009136">
    <property type="component" value="Unplaced"/>
</dbReference>
<dbReference type="GO" id="GO:0005737">
    <property type="term" value="C:cytoplasm"/>
    <property type="evidence" value="ECO:0000250"/>
    <property type="project" value="UniProtKB"/>
</dbReference>
<dbReference type="GO" id="GO:0005829">
    <property type="term" value="C:cytosol"/>
    <property type="evidence" value="ECO:0000250"/>
    <property type="project" value="UniProtKB"/>
</dbReference>
<dbReference type="GO" id="GO:0005783">
    <property type="term" value="C:endoplasmic reticulum"/>
    <property type="evidence" value="ECO:0000250"/>
    <property type="project" value="UniProtKB"/>
</dbReference>
<dbReference type="GO" id="GO:0005794">
    <property type="term" value="C:Golgi apparatus"/>
    <property type="evidence" value="ECO:0000250"/>
    <property type="project" value="UniProtKB"/>
</dbReference>
<dbReference type="GO" id="GO:0005743">
    <property type="term" value="C:mitochondrial inner membrane"/>
    <property type="evidence" value="ECO:0000318"/>
    <property type="project" value="GO_Central"/>
</dbReference>
<dbReference type="GO" id="GO:0005759">
    <property type="term" value="C:mitochondrial matrix"/>
    <property type="evidence" value="ECO:0000318"/>
    <property type="project" value="GO_Central"/>
</dbReference>
<dbReference type="GO" id="GO:0005741">
    <property type="term" value="C:mitochondrial outer membrane"/>
    <property type="evidence" value="ECO:0000318"/>
    <property type="project" value="GO_Central"/>
</dbReference>
<dbReference type="GO" id="GO:0005634">
    <property type="term" value="C:nucleus"/>
    <property type="evidence" value="ECO:0000250"/>
    <property type="project" value="UniProtKB"/>
</dbReference>
<dbReference type="GO" id="GO:0048471">
    <property type="term" value="C:perinuclear region of cytoplasm"/>
    <property type="evidence" value="ECO:0000250"/>
    <property type="project" value="UniProtKB"/>
</dbReference>
<dbReference type="GO" id="GO:0005886">
    <property type="term" value="C:plasma membrane"/>
    <property type="evidence" value="ECO:0000250"/>
    <property type="project" value="UniProtKB"/>
</dbReference>
<dbReference type="GO" id="GO:0042734">
    <property type="term" value="C:presynaptic membrane"/>
    <property type="evidence" value="ECO:0000250"/>
    <property type="project" value="UniProtKB"/>
</dbReference>
<dbReference type="GO" id="GO:0097060">
    <property type="term" value="C:synaptic membrane"/>
    <property type="evidence" value="ECO:0000318"/>
    <property type="project" value="GO_Central"/>
</dbReference>
<dbReference type="GO" id="GO:0004118">
    <property type="term" value="F:3',5'-cGMP-stimulated cyclic-nucleotide phosphodiesterase activity"/>
    <property type="evidence" value="ECO:0000314"/>
    <property type="project" value="UniProtKB"/>
</dbReference>
<dbReference type="GO" id="GO:0004115">
    <property type="term" value="F:3',5'-cyclic-AMP phosphodiesterase activity"/>
    <property type="evidence" value="ECO:0000314"/>
    <property type="project" value="UniProtKB"/>
</dbReference>
<dbReference type="GO" id="GO:0047555">
    <property type="term" value="F:3',5'-cyclic-GMP phosphodiesterase activity"/>
    <property type="evidence" value="ECO:0000314"/>
    <property type="project" value="UniProtKB"/>
</dbReference>
<dbReference type="GO" id="GO:0030553">
    <property type="term" value="F:cGMP binding"/>
    <property type="evidence" value="ECO:0000250"/>
    <property type="project" value="UniProtKB"/>
</dbReference>
<dbReference type="GO" id="GO:0046872">
    <property type="term" value="F:metal ion binding"/>
    <property type="evidence" value="ECO:0007669"/>
    <property type="project" value="UniProtKB-KW"/>
</dbReference>
<dbReference type="GO" id="GO:0042803">
    <property type="term" value="F:protein homodimerization activity"/>
    <property type="evidence" value="ECO:0000318"/>
    <property type="project" value="GO_Central"/>
</dbReference>
<dbReference type="GO" id="GO:0019933">
    <property type="term" value="P:cAMP-mediated signaling"/>
    <property type="evidence" value="ECO:0000318"/>
    <property type="project" value="GO_Central"/>
</dbReference>
<dbReference type="GO" id="GO:0071321">
    <property type="term" value="P:cellular response to cGMP"/>
    <property type="evidence" value="ECO:0000250"/>
    <property type="project" value="UniProtKB"/>
</dbReference>
<dbReference type="GO" id="GO:0097011">
    <property type="term" value="P:cellular response to granulocyte macrophage colony-stimulating factor stimulus"/>
    <property type="evidence" value="ECO:0000250"/>
    <property type="project" value="UniProtKB"/>
</dbReference>
<dbReference type="GO" id="GO:0036006">
    <property type="term" value="P:cellular response to macrophage colony-stimulating factor stimulus"/>
    <property type="evidence" value="ECO:0000250"/>
    <property type="project" value="UniProtKB"/>
</dbReference>
<dbReference type="GO" id="GO:0071260">
    <property type="term" value="P:cellular response to mechanical stimulus"/>
    <property type="evidence" value="ECO:0000250"/>
    <property type="project" value="UniProtKB"/>
</dbReference>
<dbReference type="GO" id="GO:0046069">
    <property type="term" value="P:cGMP catabolic process"/>
    <property type="evidence" value="ECO:0000250"/>
    <property type="project" value="UniProtKB"/>
</dbReference>
<dbReference type="GO" id="GO:0019934">
    <property type="term" value="P:cGMP-mediated signaling"/>
    <property type="evidence" value="ECO:0000250"/>
    <property type="project" value="UniProtKB"/>
</dbReference>
<dbReference type="GO" id="GO:0061028">
    <property type="term" value="P:establishment of endothelial barrier"/>
    <property type="evidence" value="ECO:0000250"/>
    <property type="project" value="UniProtKB"/>
</dbReference>
<dbReference type="GO" id="GO:0046038">
    <property type="term" value="P:GMP catabolic process"/>
    <property type="evidence" value="ECO:0000304"/>
    <property type="project" value="AgBase"/>
</dbReference>
<dbReference type="GO" id="GO:0106072">
    <property type="term" value="P:negative regulation of adenylate cyclase-activating G protein-coupled receptor signaling pathway"/>
    <property type="evidence" value="ECO:0000250"/>
    <property type="project" value="UniProtKB"/>
</dbReference>
<dbReference type="GO" id="GO:0010754">
    <property type="term" value="P:negative regulation of cGMP-mediated signaling"/>
    <property type="evidence" value="ECO:0000318"/>
    <property type="project" value="GO_Central"/>
</dbReference>
<dbReference type="GO" id="GO:0000122">
    <property type="term" value="P:negative regulation of transcription by RNA polymerase II"/>
    <property type="evidence" value="ECO:0000250"/>
    <property type="project" value="UniProtKB"/>
</dbReference>
<dbReference type="GO" id="GO:0043116">
    <property type="term" value="P:negative regulation of vascular permeability"/>
    <property type="evidence" value="ECO:0000250"/>
    <property type="project" value="UniProtKB"/>
</dbReference>
<dbReference type="GO" id="GO:0010628">
    <property type="term" value="P:positive regulation of gene expression"/>
    <property type="evidence" value="ECO:0000318"/>
    <property type="project" value="GO_Central"/>
</dbReference>
<dbReference type="GO" id="GO:0050729">
    <property type="term" value="P:positive regulation of inflammatory response"/>
    <property type="evidence" value="ECO:0000250"/>
    <property type="project" value="UniProtKB"/>
</dbReference>
<dbReference type="GO" id="GO:0043117">
    <property type="term" value="P:positive regulation of vascular permeability"/>
    <property type="evidence" value="ECO:0000250"/>
    <property type="project" value="UniProtKB"/>
</dbReference>
<dbReference type="GO" id="GO:0010821">
    <property type="term" value="P:regulation of mitochondrion organization"/>
    <property type="evidence" value="ECO:0000318"/>
    <property type="project" value="GO_Central"/>
</dbReference>
<dbReference type="GO" id="GO:0007165">
    <property type="term" value="P:signal transduction"/>
    <property type="evidence" value="ECO:0000303"/>
    <property type="project" value="AgBase"/>
</dbReference>
<dbReference type="CDD" id="cd00077">
    <property type="entry name" value="HDc"/>
    <property type="match status" value="1"/>
</dbReference>
<dbReference type="FunFam" id="1.10.1300.10:FF:000009">
    <property type="entry name" value="Phosphodiesterase"/>
    <property type="match status" value="1"/>
</dbReference>
<dbReference type="FunFam" id="3.30.450.40:FF:000007">
    <property type="entry name" value="Phosphodiesterase"/>
    <property type="match status" value="1"/>
</dbReference>
<dbReference type="FunFam" id="3.30.450.40:FF:000014">
    <property type="entry name" value="Phosphodiesterase"/>
    <property type="match status" value="1"/>
</dbReference>
<dbReference type="Gene3D" id="3.30.450.40">
    <property type="match status" value="2"/>
</dbReference>
<dbReference type="Gene3D" id="1.10.1300.10">
    <property type="entry name" value="3'5'-cyclic nucleotide phosphodiesterase, catalytic domain"/>
    <property type="match status" value="1"/>
</dbReference>
<dbReference type="InterPro" id="IPR003018">
    <property type="entry name" value="GAF"/>
</dbReference>
<dbReference type="InterPro" id="IPR029016">
    <property type="entry name" value="GAF-like_dom_sf"/>
</dbReference>
<dbReference type="InterPro" id="IPR003607">
    <property type="entry name" value="HD/PDEase_dom"/>
</dbReference>
<dbReference type="InterPro" id="IPR023088">
    <property type="entry name" value="PDEase"/>
</dbReference>
<dbReference type="InterPro" id="IPR002073">
    <property type="entry name" value="PDEase_catalytic_dom"/>
</dbReference>
<dbReference type="InterPro" id="IPR036971">
    <property type="entry name" value="PDEase_catalytic_dom_sf"/>
</dbReference>
<dbReference type="InterPro" id="IPR023174">
    <property type="entry name" value="PDEase_CS"/>
</dbReference>
<dbReference type="PANTHER" id="PTHR11347">
    <property type="entry name" value="CYCLIC NUCLEOTIDE PHOSPHODIESTERASE"/>
    <property type="match status" value="1"/>
</dbReference>
<dbReference type="Pfam" id="PF01590">
    <property type="entry name" value="GAF"/>
    <property type="match status" value="2"/>
</dbReference>
<dbReference type="Pfam" id="PF00233">
    <property type="entry name" value="PDEase_I"/>
    <property type="match status" value="1"/>
</dbReference>
<dbReference type="PRINTS" id="PR00387">
    <property type="entry name" value="PDIESTERASE1"/>
</dbReference>
<dbReference type="SMART" id="SM00065">
    <property type="entry name" value="GAF"/>
    <property type="match status" value="2"/>
</dbReference>
<dbReference type="SMART" id="SM00471">
    <property type="entry name" value="HDc"/>
    <property type="match status" value="1"/>
</dbReference>
<dbReference type="SUPFAM" id="SSF55781">
    <property type="entry name" value="GAF domain-like"/>
    <property type="match status" value="3"/>
</dbReference>
<dbReference type="SUPFAM" id="SSF109604">
    <property type="entry name" value="HD-domain/PDEase-like"/>
    <property type="match status" value="1"/>
</dbReference>
<dbReference type="PROSITE" id="PS00126">
    <property type="entry name" value="PDEASE_I_1"/>
    <property type="match status" value="1"/>
</dbReference>
<dbReference type="PROSITE" id="PS51845">
    <property type="entry name" value="PDEASE_I_2"/>
    <property type="match status" value="1"/>
</dbReference>